<dbReference type="EC" id="2.8.1.6" evidence="1"/>
<dbReference type="EMBL" id="AM933172">
    <property type="protein sequence ID" value="CAR32325.1"/>
    <property type="molecule type" value="Genomic_DNA"/>
</dbReference>
<dbReference type="RefSeq" id="WP_000090727.1">
    <property type="nucleotide sequence ID" value="NC_011294.1"/>
</dbReference>
<dbReference type="SMR" id="B5QX65"/>
<dbReference type="KEGG" id="set:SEN0739"/>
<dbReference type="HOGENOM" id="CLU_033172_1_2_6"/>
<dbReference type="UniPathway" id="UPA00078">
    <property type="reaction ID" value="UER00162"/>
</dbReference>
<dbReference type="Proteomes" id="UP000000613">
    <property type="component" value="Chromosome"/>
</dbReference>
<dbReference type="GO" id="GO:0051537">
    <property type="term" value="F:2 iron, 2 sulfur cluster binding"/>
    <property type="evidence" value="ECO:0007669"/>
    <property type="project" value="UniProtKB-KW"/>
</dbReference>
<dbReference type="GO" id="GO:0051539">
    <property type="term" value="F:4 iron, 4 sulfur cluster binding"/>
    <property type="evidence" value="ECO:0007669"/>
    <property type="project" value="UniProtKB-KW"/>
</dbReference>
<dbReference type="GO" id="GO:0004076">
    <property type="term" value="F:biotin synthase activity"/>
    <property type="evidence" value="ECO:0007669"/>
    <property type="project" value="UniProtKB-UniRule"/>
</dbReference>
<dbReference type="GO" id="GO:0005506">
    <property type="term" value="F:iron ion binding"/>
    <property type="evidence" value="ECO:0007669"/>
    <property type="project" value="UniProtKB-UniRule"/>
</dbReference>
<dbReference type="GO" id="GO:0009102">
    <property type="term" value="P:biotin biosynthetic process"/>
    <property type="evidence" value="ECO:0007669"/>
    <property type="project" value="UniProtKB-UniRule"/>
</dbReference>
<dbReference type="CDD" id="cd01335">
    <property type="entry name" value="Radical_SAM"/>
    <property type="match status" value="1"/>
</dbReference>
<dbReference type="FunFam" id="3.20.20.70:FF:000011">
    <property type="entry name" value="Biotin synthase"/>
    <property type="match status" value="1"/>
</dbReference>
<dbReference type="Gene3D" id="3.20.20.70">
    <property type="entry name" value="Aldolase class I"/>
    <property type="match status" value="1"/>
</dbReference>
<dbReference type="HAMAP" id="MF_01694">
    <property type="entry name" value="BioB"/>
    <property type="match status" value="1"/>
</dbReference>
<dbReference type="InterPro" id="IPR013785">
    <property type="entry name" value="Aldolase_TIM"/>
</dbReference>
<dbReference type="InterPro" id="IPR010722">
    <property type="entry name" value="BATS_dom"/>
</dbReference>
<dbReference type="InterPro" id="IPR002684">
    <property type="entry name" value="Biotin_synth/BioAB"/>
</dbReference>
<dbReference type="InterPro" id="IPR024177">
    <property type="entry name" value="Biotin_synthase"/>
</dbReference>
<dbReference type="InterPro" id="IPR006638">
    <property type="entry name" value="Elp3/MiaA/NifB-like_rSAM"/>
</dbReference>
<dbReference type="InterPro" id="IPR007197">
    <property type="entry name" value="rSAM"/>
</dbReference>
<dbReference type="NCBIfam" id="TIGR00433">
    <property type="entry name" value="bioB"/>
    <property type="match status" value="1"/>
</dbReference>
<dbReference type="PANTHER" id="PTHR22976">
    <property type="entry name" value="BIOTIN SYNTHASE"/>
    <property type="match status" value="1"/>
</dbReference>
<dbReference type="PANTHER" id="PTHR22976:SF2">
    <property type="entry name" value="BIOTIN SYNTHASE, MITOCHONDRIAL"/>
    <property type="match status" value="1"/>
</dbReference>
<dbReference type="Pfam" id="PF06968">
    <property type="entry name" value="BATS"/>
    <property type="match status" value="1"/>
</dbReference>
<dbReference type="Pfam" id="PF04055">
    <property type="entry name" value="Radical_SAM"/>
    <property type="match status" value="1"/>
</dbReference>
<dbReference type="PIRSF" id="PIRSF001619">
    <property type="entry name" value="Biotin_synth"/>
    <property type="match status" value="1"/>
</dbReference>
<dbReference type="SFLD" id="SFLDF00272">
    <property type="entry name" value="biotin_synthase"/>
    <property type="match status" value="1"/>
</dbReference>
<dbReference type="SFLD" id="SFLDS00029">
    <property type="entry name" value="Radical_SAM"/>
    <property type="match status" value="1"/>
</dbReference>
<dbReference type="SMART" id="SM00876">
    <property type="entry name" value="BATS"/>
    <property type="match status" value="1"/>
</dbReference>
<dbReference type="SMART" id="SM00729">
    <property type="entry name" value="Elp3"/>
    <property type="match status" value="1"/>
</dbReference>
<dbReference type="SUPFAM" id="SSF102114">
    <property type="entry name" value="Radical SAM enzymes"/>
    <property type="match status" value="1"/>
</dbReference>
<dbReference type="PROSITE" id="PS51918">
    <property type="entry name" value="RADICAL_SAM"/>
    <property type="match status" value="1"/>
</dbReference>
<evidence type="ECO:0000255" key="1">
    <source>
        <dbReference type="HAMAP-Rule" id="MF_01694"/>
    </source>
</evidence>
<evidence type="ECO:0000255" key="2">
    <source>
        <dbReference type="PROSITE-ProRule" id="PRU01266"/>
    </source>
</evidence>
<gene>
    <name evidence="1" type="primary">bioB</name>
    <name type="ordered locus">SEN0739</name>
</gene>
<proteinExistence type="inferred from homology"/>
<sequence length="346" mass="38776">MARHPRWTLSQVTELFEKPLLELLFEAQQIHRQHFDPQQVQVSTLLSIKTGACPEDCKYCPQSSRYKTGLEAERLMEVEQVLDSARKAKNAGSTRFCMGAAWKNPHERDMPYLEQIVQGVKAMGLETCMTLGMLNESQAQRLANAGLDYYNHNLDTSPEFYGNIITTRTYQERLDTLEKVREAGIKVCSGGIVGLGETVTDRAGLLLQLANLPTPPESVPINMLVKVKGTPLADNDDVDAFDFIRTIAVARIMMPTSYVRLSAGREQMNEQTQAMCFMAGANSIFYGCKLLTTPNPAEDKDLQLFRKLGLNPQQTRVLAGDNEQQQRLEQTLMTPDTDDYYNAAAL</sequence>
<keyword id="KW-0001">2Fe-2S</keyword>
<keyword id="KW-0004">4Fe-4S</keyword>
<keyword id="KW-0093">Biotin biosynthesis</keyword>
<keyword id="KW-0408">Iron</keyword>
<keyword id="KW-0411">Iron-sulfur</keyword>
<keyword id="KW-0479">Metal-binding</keyword>
<keyword id="KW-0949">S-adenosyl-L-methionine</keyword>
<keyword id="KW-0808">Transferase</keyword>
<protein>
    <recommendedName>
        <fullName evidence="1">Biotin synthase</fullName>
        <ecNumber evidence="1">2.8.1.6</ecNumber>
    </recommendedName>
</protein>
<feature type="chain" id="PRO_0000381599" description="Biotin synthase">
    <location>
        <begin position="1"/>
        <end position="346"/>
    </location>
</feature>
<feature type="domain" description="Radical SAM core" evidence="2">
    <location>
        <begin position="38"/>
        <end position="256"/>
    </location>
</feature>
<feature type="binding site" evidence="1">
    <location>
        <position position="53"/>
    </location>
    <ligand>
        <name>[4Fe-4S] cluster</name>
        <dbReference type="ChEBI" id="CHEBI:49883"/>
        <note>4Fe-4S-S-AdoMet</note>
    </ligand>
</feature>
<feature type="binding site" evidence="1">
    <location>
        <position position="57"/>
    </location>
    <ligand>
        <name>[4Fe-4S] cluster</name>
        <dbReference type="ChEBI" id="CHEBI:49883"/>
        <note>4Fe-4S-S-AdoMet</note>
    </ligand>
</feature>
<feature type="binding site" evidence="1">
    <location>
        <position position="60"/>
    </location>
    <ligand>
        <name>[4Fe-4S] cluster</name>
        <dbReference type="ChEBI" id="CHEBI:49883"/>
        <note>4Fe-4S-S-AdoMet</note>
    </ligand>
</feature>
<feature type="binding site" evidence="1">
    <location>
        <position position="97"/>
    </location>
    <ligand>
        <name>[2Fe-2S] cluster</name>
        <dbReference type="ChEBI" id="CHEBI:190135"/>
    </ligand>
</feature>
<feature type="binding site" evidence="1">
    <location>
        <position position="128"/>
    </location>
    <ligand>
        <name>[2Fe-2S] cluster</name>
        <dbReference type="ChEBI" id="CHEBI:190135"/>
    </ligand>
</feature>
<feature type="binding site" evidence="1">
    <location>
        <position position="188"/>
    </location>
    <ligand>
        <name>[2Fe-2S] cluster</name>
        <dbReference type="ChEBI" id="CHEBI:190135"/>
    </ligand>
</feature>
<feature type="binding site" evidence="1">
    <location>
        <position position="260"/>
    </location>
    <ligand>
        <name>[2Fe-2S] cluster</name>
        <dbReference type="ChEBI" id="CHEBI:190135"/>
    </ligand>
</feature>
<organism>
    <name type="scientific">Salmonella enteritidis PT4 (strain P125109)</name>
    <dbReference type="NCBI Taxonomy" id="550537"/>
    <lineage>
        <taxon>Bacteria</taxon>
        <taxon>Pseudomonadati</taxon>
        <taxon>Pseudomonadota</taxon>
        <taxon>Gammaproteobacteria</taxon>
        <taxon>Enterobacterales</taxon>
        <taxon>Enterobacteriaceae</taxon>
        <taxon>Salmonella</taxon>
    </lineage>
</organism>
<reference key="1">
    <citation type="journal article" date="2008" name="Genome Res.">
        <title>Comparative genome analysis of Salmonella enteritidis PT4 and Salmonella gallinarum 287/91 provides insights into evolutionary and host adaptation pathways.</title>
        <authorList>
            <person name="Thomson N.R."/>
            <person name="Clayton D.J."/>
            <person name="Windhorst D."/>
            <person name="Vernikos G."/>
            <person name="Davidson S."/>
            <person name="Churcher C."/>
            <person name="Quail M.A."/>
            <person name="Stevens M."/>
            <person name="Jones M.A."/>
            <person name="Watson M."/>
            <person name="Barron A."/>
            <person name="Layton A."/>
            <person name="Pickard D."/>
            <person name="Kingsley R.A."/>
            <person name="Bignell A."/>
            <person name="Clark L."/>
            <person name="Harris B."/>
            <person name="Ormond D."/>
            <person name="Abdellah Z."/>
            <person name="Brooks K."/>
            <person name="Cherevach I."/>
            <person name="Chillingworth T."/>
            <person name="Woodward J."/>
            <person name="Norberczak H."/>
            <person name="Lord A."/>
            <person name="Arrowsmith C."/>
            <person name="Jagels K."/>
            <person name="Moule S."/>
            <person name="Mungall K."/>
            <person name="Saunders M."/>
            <person name="Whitehead S."/>
            <person name="Chabalgoity J.A."/>
            <person name="Maskell D."/>
            <person name="Humphreys T."/>
            <person name="Roberts M."/>
            <person name="Barrow P.A."/>
            <person name="Dougan G."/>
            <person name="Parkhill J."/>
        </authorList>
    </citation>
    <scope>NUCLEOTIDE SEQUENCE [LARGE SCALE GENOMIC DNA]</scope>
    <source>
        <strain>P125109</strain>
    </source>
</reference>
<name>BIOB_SALEP</name>
<comment type="function">
    <text evidence="1">Catalyzes the conversion of dethiobiotin (DTB) to biotin by the insertion of a sulfur atom into dethiobiotin via a radical-based mechanism.</text>
</comment>
<comment type="catalytic activity">
    <reaction evidence="1">
        <text>(4R,5S)-dethiobiotin + (sulfur carrier)-SH + 2 reduced [2Fe-2S]-[ferredoxin] + 2 S-adenosyl-L-methionine = (sulfur carrier)-H + biotin + 2 5'-deoxyadenosine + 2 L-methionine + 2 oxidized [2Fe-2S]-[ferredoxin]</text>
        <dbReference type="Rhea" id="RHEA:22060"/>
        <dbReference type="Rhea" id="RHEA-COMP:10000"/>
        <dbReference type="Rhea" id="RHEA-COMP:10001"/>
        <dbReference type="Rhea" id="RHEA-COMP:14737"/>
        <dbReference type="Rhea" id="RHEA-COMP:14739"/>
        <dbReference type="ChEBI" id="CHEBI:17319"/>
        <dbReference type="ChEBI" id="CHEBI:29917"/>
        <dbReference type="ChEBI" id="CHEBI:33737"/>
        <dbReference type="ChEBI" id="CHEBI:33738"/>
        <dbReference type="ChEBI" id="CHEBI:57586"/>
        <dbReference type="ChEBI" id="CHEBI:57844"/>
        <dbReference type="ChEBI" id="CHEBI:59789"/>
        <dbReference type="ChEBI" id="CHEBI:64428"/>
        <dbReference type="ChEBI" id="CHEBI:149473"/>
        <dbReference type="EC" id="2.8.1.6"/>
    </reaction>
</comment>
<comment type="cofactor">
    <cofactor evidence="1">
        <name>[4Fe-4S] cluster</name>
        <dbReference type="ChEBI" id="CHEBI:49883"/>
    </cofactor>
    <text evidence="1">Binds 1 [4Fe-4S] cluster. The cluster is coordinated with 3 cysteines and an exchangeable S-adenosyl-L-methionine.</text>
</comment>
<comment type="cofactor">
    <cofactor evidence="1">
        <name>[2Fe-2S] cluster</name>
        <dbReference type="ChEBI" id="CHEBI:190135"/>
    </cofactor>
    <text evidence="1">Binds 1 [2Fe-2S] cluster. The cluster is coordinated with 3 cysteines and 1 arginine.</text>
</comment>
<comment type="pathway">
    <text evidence="1">Cofactor biosynthesis; biotin biosynthesis; biotin from 7,8-diaminononanoate: step 2/2.</text>
</comment>
<comment type="subunit">
    <text evidence="1">Homodimer.</text>
</comment>
<comment type="similarity">
    <text evidence="1">Belongs to the radical SAM superfamily. Biotin synthase family.</text>
</comment>
<accession>B5QX65</accession>